<evidence type="ECO:0000250" key="1"/>
<evidence type="ECO:0000255" key="2"/>
<evidence type="ECO:0000305" key="3"/>
<keyword id="KW-0052">Apoplast</keyword>
<keyword id="KW-1015">Disulfide bond</keyword>
<keyword id="KW-0325">Glycoprotein</keyword>
<keyword id="KW-0464">Manganese</keyword>
<keyword id="KW-0479">Metal-binding</keyword>
<keyword id="KW-1185">Reference proteome</keyword>
<keyword id="KW-0964">Secreted</keyword>
<keyword id="KW-0732">Signal</keyword>
<protein>
    <recommendedName>
        <fullName>Germin-like protein 2-4</fullName>
    </recommendedName>
</protein>
<accession>Q6ESF0</accession>
<accession>A0A0P0VK03</accession>
<dbReference type="EMBL" id="AP005110">
    <property type="protein sequence ID" value="BAD28420.1"/>
    <property type="molecule type" value="Genomic_DNA"/>
</dbReference>
<dbReference type="EMBL" id="AP008208">
    <property type="protein sequence ID" value="BAF08939.1"/>
    <property type="molecule type" value="Genomic_DNA"/>
</dbReference>
<dbReference type="EMBL" id="AP014958">
    <property type="protein sequence ID" value="BAS79042.1"/>
    <property type="molecule type" value="Genomic_DNA"/>
</dbReference>
<dbReference type="EMBL" id="AK059817">
    <property type="protein sequence ID" value="BAG87146.1"/>
    <property type="molecule type" value="mRNA"/>
</dbReference>
<dbReference type="RefSeq" id="XP_015622959.1">
    <property type="nucleotide sequence ID" value="XM_015767473.1"/>
</dbReference>
<dbReference type="SMR" id="Q6ESF0"/>
<dbReference type="FunCoup" id="Q6ESF0">
    <property type="interactions" value="169"/>
</dbReference>
<dbReference type="STRING" id="39947.Q6ESF0"/>
<dbReference type="PaxDb" id="39947-Q6ESF0"/>
<dbReference type="EnsemblPlants" id="Os02t0532500-01">
    <property type="protein sequence ID" value="Os02t0532500-01"/>
    <property type="gene ID" value="Os02g0532500"/>
</dbReference>
<dbReference type="Gramene" id="Os02t0532500-01">
    <property type="protein sequence ID" value="Os02t0532500-01"/>
    <property type="gene ID" value="Os02g0532500"/>
</dbReference>
<dbReference type="KEGG" id="dosa:Os02g0532500"/>
<dbReference type="eggNOG" id="ENOG502RDTK">
    <property type="taxonomic scope" value="Eukaryota"/>
</dbReference>
<dbReference type="HOGENOM" id="CLU_015790_0_3_1"/>
<dbReference type="InParanoid" id="Q6ESF0"/>
<dbReference type="OMA" id="AINPPHF"/>
<dbReference type="OrthoDB" id="1921208at2759"/>
<dbReference type="Proteomes" id="UP000000763">
    <property type="component" value="Chromosome 2"/>
</dbReference>
<dbReference type="Proteomes" id="UP000059680">
    <property type="component" value="Chromosome 2"/>
</dbReference>
<dbReference type="GO" id="GO:0048046">
    <property type="term" value="C:apoplast"/>
    <property type="evidence" value="ECO:0007669"/>
    <property type="project" value="UniProtKB-SubCell"/>
</dbReference>
<dbReference type="GO" id="GO:0030145">
    <property type="term" value="F:manganese ion binding"/>
    <property type="evidence" value="ECO:0007669"/>
    <property type="project" value="InterPro"/>
</dbReference>
<dbReference type="CDD" id="cd02241">
    <property type="entry name" value="cupin_OxOx"/>
    <property type="match status" value="1"/>
</dbReference>
<dbReference type="FunFam" id="2.60.120.10:FF:000025">
    <property type="entry name" value="germin-like protein subfamily 2 member 1"/>
    <property type="match status" value="1"/>
</dbReference>
<dbReference type="Gene3D" id="2.60.120.10">
    <property type="entry name" value="Jelly Rolls"/>
    <property type="match status" value="1"/>
</dbReference>
<dbReference type="InterPro" id="IPR006045">
    <property type="entry name" value="Cupin_1"/>
</dbReference>
<dbReference type="InterPro" id="IPR001929">
    <property type="entry name" value="Germin"/>
</dbReference>
<dbReference type="InterPro" id="IPR014710">
    <property type="entry name" value="RmlC-like_jellyroll"/>
</dbReference>
<dbReference type="InterPro" id="IPR011051">
    <property type="entry name" value="RmlC_Cupin_sf"/>
</dbReference>
<dbReference type="PANTHER" id="PTHR31238">
    <property type="entry name" value="GERMIN-LIKE PROTEIN SUBFAMILY 3 MEMBER 3"/>
    <property type="match status" value="1"/>
</dbReference>
<dbReference type="Pfam" id="PF00190">
    <property type="entry name" value="Cupin_1"/>
    <property type="match status" value="1"/>
</dbReference>
<dbReference type="PRINTS" id="PR00325">
    <property type="entry name" value="GERMIN"/>
</dbReference>
<dbReference type="SMART" id="SM00835">
    <property type="entry name" value="Cupin_1"/>
    <property type="match status" value="1"/>
</dbReference>
<dbReference type="SUPFAM" id="SSF51182">
    <property type="entry name" value="RmlC-like cupins"/>
    <property type="match status" value="1"/>
</dbReference>
<name>GL24_ORYSJ</name>
<reference key="1">
    <citation type="journal article" date="2005" name="Nature">
        <title>The map-based sequence of the rice genome.</title>
        <authorList>
            <consortium name="International rice genome sequencing project (IRGSP)"/>
        </authorList>
    </citation>
    <scope>NUCLEOTIDE SEQUENCE [LARGE SCALE GENOMIC DNA]</scope>
    <source>
        <strain>cv. Nipponbare</strain>
    </source>
</reference>
<reference key="2">
    <citation type="journal article" date="2008" name="Nucleic Acids Res.">
        <title>The rice annotation project database (RAP-DB): 2008 update.</title>
        <authorList>
            <consortium name="The rice annotation project (RAP)"/>
        </authorList>
    </citation>
    <scope>GENOME REANNOTATION</scope>
    <source>
        <strain>cv. Nipponbare</strain>
    </source>
</reference>
<reference key="3">
    <citation type="journal article" date="2013" name="Rice">
        <title>Improvement of the Oryza sativa Nipponbare reference genome using next generation sequence and optical map data.</title>
        <authorList>
            <person name="Kawahara Y."/>
            <person name="de la Bastide M."/>
            <person name="Hamilton J.P."/>
            <person name="Kanamori H."/>
            <person name="McCombie W.R."/>
            <person name="Ouyang S."/>
            <person name="Schwartz D.C."/>
            <person name="Tanaka T."/>
            <person name="Wu J."/>
            <person name="Zhou S."/>
            <person name="Childs K.L."/>
            <person name="Davidson R.M."/>
            <person name="Lin H."/>
            <person name="Quesada-Ocampo L."/>
            <person name="Vaillancourt B."/>
            <person name="Sakai H."/>
            <person name="Lee S.S."/>
            <person name="Kim J."/>
            <person name="Numa H."/>
            <person name="Itoh T."/>
            <person name="Buell C.R."/>
            <person name="Matsumoto T."/>
        </authorList>
    </citation>
    <scope>GENOME REANNOTATION</scope>
    <source>
        <strain>cv. Nipponbare</strain>
    </source>
</reference>
<reference key="4">
    <citation type="journal article" date="2003" name="Science">
        <title>Collection, mapping, and annotation of over 28,000 cDNA clones from japonica rice.</title>
        <authorList>
            <consortium name="The rice full-length cDNA consortium"/>
        </authorList>
    </citation>
    <scope>NUCLEOTIDE SEQUENCE [LARGE SCALE MRNA]</scope>
    <source>
        <strain>cv. Nipponbare</strain>
    </source>
</reference>
<gene>
    <name type="ordered locus">Os02g0532500</name>
    <name type="ordered locus">LOC_Os02g32980</name>
    <name type="ORF">P0605D08.24</name>
</gene>
<comment type="function">
    <text>May play a role in plant defense. Probably has no oxalate oxidase activity even if the active site is conserved.</text>
</comment>
<comment type="subunit">
    <text evidence="1">Oligomer (believed to be a pentamer but probably hexamer).</text>
</comment>
<comment type="subcellular location">
    <subcellularLocation>
        <location evidence="1">Secreted</location>
        <location evidence="1">Extracellular space</location>
        <location evidence="1">Apoplast</location>
    </subcellularLocation>
</comment>
<comment type="similarity">
    <text evidence="3">Belongs to the germin family.</text>
</comment>
<feature type="signal peptide" evidence="2">
    <location>
        <begin position="1"/>
        <end position="23"/>
    </location>
</feature>
<feature type="chain" id="PRO_0000365501" description="Germin-like protein 2-4">
    <location>
        <begin position="24"/>
        <end position="229"/>
    </location>
</feature>
<feature type="domain" description="Cupin type-1" evidence="2">
    <location>
        <begin position="66"/>
        <end position="213"/>
    </location>
</feature>
<feature type="binding site" evidence="1">
    <location>
        <position position="115"/>
    </location>
    <ligand>
        <name>Mn(2+)</name>
        <dbReference type="ChEBI" id="CHEBI:29035"/>
    </ligand>
</feature>
<feature type="binding site" evidence="1">
    <location>
        <position position="117"/>
    </location>
    <ligand>
        <name>Mn(2+)</name>
        <dbReference type="ChEBI" id="CHEBI:29035"/>
    </ligand>
</feature>
<feature type="binding site" evidence="1">
    <location>
        <position position="122"/>
    </location>
    <ligand>
        <name>Mn(2+)</name>
        <dbReference type="ChEBI" id="CHEBI:29035"/>
    </ligand>
</feature>
<feature type="binding site" evidence="1">
    <location>
        <position position="161"/>
    </location>
    <ligand>
        <name>Mn(2+)</name>
        <dbReference type="ChEBI" id="CHEBI:29035"/>
    </ligand>
</feature>
<feature type="glycosylation site" description="N-linked (GlcNAc...) asparagine" evidence="2">
    <location>
        <position position="57"/>
    </location>
</feature>
<feature type="disulfide bond" evidence="1">
    <location>
        <begin position="32"/>
        <end position="52"/>
    </location>
</feature>
<sequence length="229" mass="24318">MAHRRRCLLLLLAVLLPAMAARGDPDAVQDFCVPDAGRGRPVELAMLPAYPCRSPANLTAGDFAFSGVRAAGNFSPETGFAGVSVTPAQFPGLHTLGMSFARADLSAAGGVNPPHYHPRATETALVLAGRVYAGFVDSGGRLFAKVLEQGEVMVFPRAMVHFQLNVGDTPATVYGAFNSENPGIVRIPATVFGSGIREAVLERAFGLTPAELRRLEKRFGPPKKAEMED</sequence>
<organism>
    <name type="scientific">Oryza sativa subsp. japonica</name>
    <name type="common">Rice</name>
    <dbReference type="NCBI Taxonomy" id="39947"/>
    <lineage>
        <taxon>Eukaryota</taxon>
        <taxon>Viridiplantae</taxon>
        <taxon>Streptophyta</taxon>
        <taxon>Embryophyta</taxon>
        <taxon>Tracheophyta</taxon>
        <taxon>Spermatophyta</taxon>
        <taxon>Magnoliopsida</taxon>
        <taxon>Liliopsida</taxon>
        <taxon>Poales</taxon>
        <taxon>Poaceae</taxon>
        <taxon>BOP clade</taxon>
        <taxon>Oryzoideae</taxon>
        <taxon>Oryzeae</taxon>
        <taxon>Oryzinae</taxon>
        <taxon>Oryza</taxon>
        <taxon>Oryza sativa</taxon>
    </lineage>
</organism>
<proteinExistence type="evidence at transcript level"/>